<dbReference type="EC" id="2.5.1.61" evidence="1"/>
<dbReference type="EMBL" id="AM408590">
    <property type="protein sequence ID" value="CAL70538.1"/>
    <property type="molecule type" value="Genomic_DNA"/>
</dbReference>
<dbReference type="RefSeq" id="WP_003402702.1">
    <property type="nucleotide sequence ID" value="NC_008769.1"/>
</dbReference>
<dbReference type="SMR" id="A1KFY6"/>
<dbReference type="KEGG" id="mbb:BCG_0553"/>
<dbReference type="HOGENOM" id="CLU_019704_1_0_11"/>
<dbReference type="UniPathway" id="UPA00251">
    <property type="reaction ID" value="UER00319"/>
</dbReference>
<dbReference type="Proteomes" id="UP000001472">
    <property type="component" value="Chromosome"/>
</dbReference>
<dbReference type="GO" id="GO:0005737">
    <property type="term" value="C:cytoplasm"/>
    <property type="evidence" value="ECO:0007669"/>
    <property type="project" value="TreeGrafter"/>
</dbReference>
<dbReference type="GO" id="GO:0004418">
    <property type="term" value="F:hydroxymethylbilane synthase activity"/>
    <property type="evidence" value="ECO:0007669"/>
    <property type="project" value="UniProtKB-UniRule"/>
</dbReference>
<dbReference type="GO" id="GO:0006782">
    <property type="term" value="P:protoporphyrinogen IX biosynthetic process"/>
    <property type="evidence" value="ECO:0007669"/>
    <property type="project" value="UniProtKB-UniRule"/>
</dbReference>
<dbReference type="CDD" id="cd13646">
    <property type="entry name" value="PBP2_EcHMBS_like"/>
    <property type="match status" value="1"/>
</dbReference>
<dbReference type="FunFam" id="3.30.160.40:FF:000001">
    <property type="entry name" value="Porphobilinogen deaminase"/>
    <property type="match status" value="1"/>
</dbReference>
<dbReference type="FunFam" id="3.40.190.10:FF:000005">
    <property type="entry name" value="Porphobilinogen deaminase"/>
    <property type="match status" value="1"/>
</dbReference>
<dbReference type="Gene3D" id="3.40.190.10">
    <property type="entry name" value="Periplasmic binding protein-like II"/>
    <property type="match status" value="2"/>
</dbReference>
<dbReference type="Gene3D" id="3.30.160.40">
    <property type="entry name" value="Porphobilinogen deaminase, C-terminal domain"/>
    <property type="match status" value="1"/>
</dbReference>
<dbReference type="HAMAP" id="MF_00260">
    <property type="entry name" value="Porphobil_deam"/>
    <property type="match status" value="1"/>
</dbReference>
<dbReference type="InterPro" id="IPR000860">
    <property type="entry name" value="HemC"/>
</dbReference>
<dbReference type="InterPro" id="IPR022419">
    <property type="entry name" value="Porphobilin_deaminase_cofac_BS"/>
</dbReference>
<dbReference type="InterPro" id="IPR022417">
    <property type="entry name" value="Porphobilin_deaminase_N"/>
</dbReference>
<dbReference type="InterPro" id="IPR022418">
    <property type="entry name" value="Porphobilinogen_deaminase_C"/>
</dbReference>
<dbReference type="InterPro" id="IPR036803">
    <property type="entry name" value="Porphobilinogen_deaminase_C_sf"/>
</dbReference>
<dbReference type="NCBIfam" id="TIGR00212">
    <property type="entry name" value="hemC"/>
    <property type="match status" value="1"/>
</dbReference>
<dbReference type="PANTHER" id="PTHR11557">
    <property type="entry name" value="PORPHOBILINOGEN DEAMINASE"/>
    <property type="match status" value="1"/>
</dbReference>
<dbReference type="PANTHER" id="PTHR11557:SF0">
    <property type="entry name" value="PORPHOBILINOGEN DEAMINASE"/>
    <property type="match status" value="1"/>
</dbReference>
<dbReference type="Pfam" id="PF01379">
    <property type="entry name" value="Porphobil_deam"/>
    <property type="match status" value="1"/>
</dbReference>
<dbReference type="Pfam" id="PF03900">
    <property type="entry name" value="Porphobil_deamC"/>
    <property type="match status" value="1"/>
</dbReference>
<dbReference type="PIRSF" id="PIRSF001438">
    <property type="entry name" value="4pyrrol_synth_OHMeBilane_synth"/>
    <property type="match status" value="1"/>
</dbReference>
<dbReference type="PRINTS" id="PR00151">
    <property type="entry name" value="PORPHBDMNASE"/>
</dbReference>
<dbReference type="SUPFAM" id="SSF53850">
    <property type="entry name" value="Periplasmic binding protein-like II"/>
    <property type="match status" value="1"/>
</dbReference>
<dbReference type="SUPFAM" id="SSF54782">
    <property type="entry name" value="Porphobilinogen deaminase (hydroxymethylbilane synthase), C-terminal domain"/>
    <property type="match status" value="1"/>
</dbReference>
<dbReference type="PROSITE" id="PS00533">
    <property type="entry name" value="PORPHOBILINOGEN_DEAM"/>
    <property type="match status" value="1"/>
</dbReference>
<keyword id="KW-0627">Porphyrin biosynthesis</keyword>
<keyword id="KW-0808">Transferase</keyword>
<name>HEM3_MYCBP</name>
<protein>
    <recommendedName>
        <fullName evidence="1">Porphobilinogen deaminase</fullName>
        <shortName evidence="1">PBG</shortName>
        <ecNumber evidence="1">2.5.1.61</ecNumber>
    </recommendedName>
    <alternativeName>
        <fullName evidence="1">Hydroxymethylbilane synthase</fullName>
        <shortName evidence="1">HMBS</shortName>
    </alternativeName>
    <alternativeName>
        <fullName evidence="1">Pre-uroporphyrinogen synthase</fullName>
    </alternativeName>
</protein>
<feature type="chain" id="PRO_0000304251" description="Porphobilinogen deaminase">
    <location>
        <begin position="1"/>
        <end position="309"/>
    </location>
</feature>
<feature type="modified residue" description="S-(dipyrrolylmethanemethyl)cysteine" evidence="1">
    <location>
        <position position="234"/>
    </location>
</feature>
<sequence>MIRIGTRGSLLATTQAATVRDALIAGGHSAELVTISTEGDRSMAPIASLGVGVFTTALREAMEAGLVDAAVHSYKDLPTAADPRFTVAAIPPRNDPRDAVVARDGLTLGELPVGSLVGTSSPRRAAQLRALGLGLEIRPLRGNLDTRLNKVSSGDLDAIVVARAGLARLGRLDDVTETLEPVQMLPAPAQGALAVECRAGDSRLVAVLAELDDADTRAAVTAERALLADLEAGCSAPVGAIAEVVESIDEDGRVFEELSLRGCVAALDGSDVIRASGIGSCGRARELGLSVAAELFELGARELMWGVRH</sequence>
<reference key="1">
    <citation type="journal article" date="2007" name="Proc. Natl. Acad. Sci. U.S.A.">
        <title>Genome plasticity of BCG and impact on vaccine efficacy.</title>
        <authorList>
            <person name="Brosch R."/>
            <person name="Gordon S.V."/>
            <person name="Garnier T."/>
            <person name="Eiglmeier K."/>
            <person name="Frigui W."/>
            <person name="Valenti P."/>
            <person name="Dos Santos S."/>
            <person name="Duthoy S."/>
            <person name="Lacroix C."/>
            <person name="Garcia-Pelayo C."/>
            <person name="Inwald J.K."/>
            <person name="Golby P."/>
            <person name="Garcia J.N."/>
            <person name="Hewinson R.G."/>
            <person name="Behr M.A."/>
            <person name="Quail M.A."/>
            <person name="Churcher C."/>
            <person name="Barrell B.G."/>
            <person name="Parkhill J."/>
            <person name="Cole S.T."/>
        </authorList>
    </citation>
    <scope>NUCLEOTIDE SEQUENCE [LARGE SCALE GENOMIC DNA]</scope>
    <source>
        <strain>BCG / Pasteur 1173P2</strain>
    </source>
</reference>
<accession>A1KFY6</accession>
<organism>
    <name type="scientific">Mycobacterium bovis (strain BCG / Pasteur 1173P2)</name>
    <dbReference type="NCBI Taxonomy" id="410289"/>
    <lineage>
        <taxon>Bacteria</taxon>
        <taxon>Bacillati</taxon>
        <taxon>Actinomycetota</taxon>
        <taxon>Actinomycetes</taxon>
        <taxon>Mycobacteriales</taxon>
        <taxon>Mycobacteriaceae</taxon>
        <taxon>Mycobacterium</taxon>
        <taxon>Mycobacterium tuberculosis complex</taxon>
    </lineage>
</organism>
<comment type="function">
    <text evidence="1">Tetrapolymerization of the monopyrrole PBG into the hydroxymethylbilane pre-uroporphyrinogen in several discrete steps.</text>
</comment>
<comment type="catalytic activity">
    <reaction evidence="1">
        <text>4 porphobilinogen + H2O = hydroxymethylbilane + 4 NH4(+)</text>
        <dbReference type="Rhea" id="RHEA:13185"/>
        <dbReference type="ChEBI" id="CHEBI:15377"/>
        <dbReference type="ChEBI" id="CHEBI:28938"/>
        <dbReference type="ChEBI" id="CHEBI:57845"/>
        <dbReference type="ChEBI" id="CHEBI:58126"/>
        <dbReference type="EC" id="2.5.1.61"/>
    </reaction>
</comment>
<comment type="cofactor">
    <cofactor evidence="1">
        <name>dipyrromethane</name>
        <dbReference type="ChEBI" id="CHEBI:60342"/>
    </cofactor>
    <text evidence="1">Binds 1 dipyrromethane group covalently.</text>
</comment>
<comment type="pathway">
    <text evidence="1">Porphyrin-containing compound metabolism; protoporphyrin-IX biosynthesis; coproporphyrinogen-III from 5-aminolevulinate: step 2/4.</text>
</comment>
<comment type="subunit">
    <text evidence="1">Monomer.</text>
</comment>
<comment type="miscellaneous">
    <text evidence="1">The porphobilinogen subunits are added to the dipyrromethane group.</text>
</comment>
<comment type="similarity">
    <text evidence="1">Belongs to the HMBS family.</text>
</comment>
<proteinExistence type="inferred from homology"/>
<gene>
    <name evidence="1" type="primary">hemC</name>
    <name type="ordered locus">BCG_0553</name>
</gene>
<evidence type="ECO:0000255" key="1">
    <source>
        <dbReference type="HAMAP-Rule" id="MF_00260"/>
    </source>
</evidence>